<feature type="chain" id="PRO_0000111902" description="Protein-L-isoaspartate O-methyltransferase">
    <location>
        <begin position="1"/>
        <end position="208"/>
    </location>
</feature>
<feature type="active site" evidence="1">
    <location>
        <position position="59"/>
    </location>
</feature>
<name>PIMT_SALTI</name>
<accession>Q8Z474</accession>
<evidence type="ECO:0000255" key="1">
    <source>
        <dbReference type="HAMAP-Rule" id="MF_00090"/>
    </source>
</evidence>
<keyword id="KW-0963">Cytoplasm</keyword>
<keyword id="KW-0489">Methyltransferase</keyword>
<keyword id="KW-0949">S-adenosyl-L-methionine</keyword>
<keyword id="KW-0808">Transferase</keyword>
<reference key="1">
    <citation type="journal article" date="2001" name="Nature">
        <title>Complete genome sequence of a multiple drug resistant Salmonella enterica serovar Typhi CT18.</title>
        <authorList>
            <person name="Parkhill J."/>
            <person name="Dougan G."/>
            <person name="James K.D."/>
            <person name="Thomson N.R."/>
            <person name="Pickard D."/>
            <person name="Wain J."/>
            <person name="Churcher C.M."/>
            <person name="Mungall K.L."/>
            <person name="Bentley S.D."/>
            <person name="Holden M.T.G."/>
            <person name="Sebaihia M."/>
            <person name="Baker S."/>
            <person name="Basham D."/>
            <person name="Brooks K."/>
            <person name="Chillingworth T."/>
            <person name="Connerton P."/>
            <person name="Cronin A."/>
            <person name="Davis P."/>
            <person name="Davies R.M."/>
            <person name="Dowd L."/>
            <person name="White N."/>
            <person name="Farrar J."/>
            <person name="Feltwell T."/>
            <person name="Hamlin N."/>
            <person name="Haque A."/>
            <person name="Hien T.T."/>
            <person name="Holroyd S."/>
            <person name="Jagels K."/>
            <person name="Krogh A."/>
            <person name="Larsen T.S."/>
            <person name="Leather S."/>
            <person name="Moule S."/>
            <person name="O'Gaora P."/>
            <person name="Parry C."/>
            <person name="Quail M.A."/>
            <person name="Rutherford K.M."/>
            <person name="Simmonds M."/>
            <person name="Skelton J."/>
            <person name="Stevens K."/>
            <person name="Whitehead S."/>
            <person name="Barrell B.G."/>
        </authorList>
    </citation>
    <scope>NUCLEOTIDE SEQUENCE [LARGE SCALE GENOMIC DNA]</scope>
    <source>
        <strain>CT18</strain>
    </source>
</reference>
<reference key="2">
    <citation type="journal article" date="2003" name="J. Bacteriol.">
        <title>Comparative genomics of Salmonella enterica serovar Typhi strains Ty2 and CT18.</title>
        <authorList>
            <person name="Deng W."/>
            <person name="Liou S.-R."/>
            <person name="Plunkett G. III"/>
            <person name="Mayhew G.F."/>
            <person name="Rose D.J."/>
            <person name="Burland V."/>
            <person name="Kodoyianni V."/>
            <person name="Schwartz D.C."/>
            <person name="Blattner F.R."/>
        </authorList>
    </citation>
    <scope>NUCLEOTIDE SEQUENCE [LARGE SCALE GENOMIC DNA]</scope>
    <source>
        <strain>ATCC 700931 / Ty2</strain>
    </source>
</reference>
<proteinExistence type="inferred from homology"/>
<gene>
    <name evidence="1" type="primary">pcm</name>
    <name type="ordered locus">STY3051</name>
    <name type="ordered locus">t2827</name>
</gene>
<organism>
    <name type="scientific">Salmonella typhi</name>
    <dbReference type="NCBI Taxonomy" id="90370"/>
    <lineage>
        <taxon>Bacteria</taxon>
        <taxon>Pseudomonadati</taxon>
        <taxon>Pseudomonadota</taxon>
        <taxon>Gammaproteobacteria</taxon>
        <taxon>Enterobacterales</taxon>
        <taxon>Enterobacteriaceae</taxon>
        <taxon>Salmonella</taxon>
    </lineage>
</organism>
<sequence>MVSGRVQALLEQLRAQGIRDELVLNALAAVPREKFIDEAFEHKAWENIALPIGQGQTISQPYMVARMTELLELTPQSRVLEIGTGSGYQTAILAHLVHHVCSVERIKGLQWQARRRLKQLDLHNVSTRHGDGWQGWQARAPFDAIIVTAAPPEIPTALMAQLDEGGILVLPVGDEQQFLKRVRRRGGEFIIDTVEAVRFVPLVKGELA</sequence>
<protein>
    <recommendedName>
        <fullName evidence="1">Protein-L-isoaspartate O-methyltransferase</fullName>
        <ecNumber evidence="1">2.1.1.77</ecNumber>
    </recommendedName>
    <alternativeName>
        <fullName evidence="1">L-isoaspartyl protein carboxyl methyltransferase</fullName>
    </alternativeName>
    <alternativeName>
        <fullName evidence="1">Protein L-isoaspartyl methyltransferase</fullName>
    </alternativeName>
    <alternativeName>
        <fullName evidence="1">Protein-beta-aspartate methyltransferase</fullName>
        <shortName evidence="1">PIMT</shortName>
    </alternativeName>
</protein>
<comment type="function">
    <text evidence="1">Catalyzes the methyl esterification of L-isoaspartyl residues in peptides and proteins that result from spontaneous decomposition of normal L-aspartyl and L-asparaginyl residues. It plays a role in the repair and/or degradation of damaged proteins.</text>
</comment>
<comment type="catalytic activity">
    <reaction evidence="1">
        <text>[protein]-L-isoaspartate + S-adenosyl-L-methionine = [protein]-L-isoaspartate alpha-methyl ester + S-adenosyl-L-homocysteine</text>
        <dbReference type="Rhea" id="RHEA:12705"/>
        <dbReference type="Rhea" id="RHEA-COMP:12143"/>
        <dbReference type="Rhea" id="RHEA-COMP:12144"/>
        <dbReference type="ChEBI" id="CHEBI:57856"/>
        <dbReference type="ChEBI" id="CHEBI:59789"/>
        <dbReference type="ChEBI" id="CHEBI:90596"/>
        <dbReference type="ChEBI" id="CHEBI:90598"/>
        <dbReference type="EC" id="2.1.1.77"/>
    </reaction>
</comment>
<comment type="subcellular location">
    <subcellularLocation>
        <location evidence="1">Cytoplasm</location>
    </subcellularLocation>
</comment>
<comment type="similarity">
    <text evidence="1">Belongs to the methyltransferase superfamily. L-isoaspartyl/D-aspartyl protein methyltransferase family.</text>
</comment>
<dbReference type="EC" id="2.1.1.77" evidence="1"/>
<dbReference type="EMBL" id="AL513382">
    <property type="protein sequence ID" value="CAD06032.1"/>
    <property type="molecule type" value="Genomic_DNA"/>
</dbReference>
<dbReference type="EMBL" id="AE014613">
    <property type="protein sequence ID" value="AAO70384.1"/>
    <property type="molecule type" value="Genomic_DNA"/>
</dbReference>
<dbReference type="RefSeq" id="NP_457315.1">
    <property type="nucleotide sequence ID" value="NC_003198.1"/>
</dbReference>
<dbReference type="RefSeq" id="WP_000253542.1">
    <property type="nucleotide sequence ID" value="NZ_WSUR01000005.1"/>
</dbReference>
<dbReference type="SMR" id="Q8Z474"/>
<dbReference type="STRING" id="220341.gene:17586942"/>
<dbReference type="KEGG" id="stt:t2827"/>
<dbReference type="KEGG" id="sty:STY3051"/>
<dbReference type="PATRIC" id="fig|220341.7.peg.3104"/>
<dbReference type="eggNOG" id="COG2518">
    <property type="taxonomic scope" value="Bacteria"/>
</dbReference>
<dbReference type="HOGENOM" id="CLU_055432_2_0_6"/>
<dbReference type="OMA" id="HMHASAC"/>
<dbReference type="OrthoDB" id="9810066at2"/>
<dbReference type="Proteomes" id="UP000000541">
    <property type="component" value="Chromosome"/>
</dbReference>
<dbReference type="Proteomes" id="UP000002670">
    <property type="component" value="Chromosome"/>
</dbReference>
<dbReference type="GO" id="GO:0005737">
    <property type="term" value="C:cytoplasm"/>
    <property type="evidence" value="ECO:0007669"/>
    <property type="project" value="UniProtKB-SubCell"/>
</dbReference>
<dbReference type="GO" id="GO:0004719">
    <property type="term" value="F:protein-L-isoaspartate (D-aspartate) O-methyltransferase activity"/>
    <property type="evidence" value="ECO:0007669"/>
    <property type="project" value="UniProtKB-UniRule"/>
</dbReference>
<dbReference type="GO" id="GO:0032259">
    <property type="term" value="P:methylation"/>
    <property type="evidence" value="ECO:0007669"/>
    <property type="project" value="UniProtKB-KW"/>
</dbReference>
<dbReference type="GO" id="GO:0036211">
    <property type="term" value="P:protein modification process"/>
    <property type="evidence" value="ECO:0007669"/>
    <property type="project" value="UniProtKB-UniRule"/>
</dbReference>
<dbReference type="GO" id="GO:0030091">
    <property type="term" value="P:protein repair"/>
    <property type="evidence" value="ECO:0007669"/>
    <property type="project" value="UniProtKB-UniRule"/>
</dbReference>
<dbReference type="CDD" id="cd02440">
    <property type="entry name" value="AdoMet_MTases"/>
    <property type="match status" value="1"/>
</dbReference>
<dbReference type="FunFam" id="3.40.50.150:FF:000010">
    <property type="entry name" value="Protein-L-isoaspartate O-methyltransferase"/>
    <property type="match status" value="1"/>
</dbReference>
<dbReference type="Gene3D" id="3.40.50.150">
    <property type="entry name" value="Vaccinia Virus protein VP39"/>
    <property type="match status" value="1"/>
</dbReference>
<dbReference type="HAMAP" id="MF_00090">
    <property type="entry name" value="PIMT"/>
    <property type="match status" value="1"/>
</dbReference>
<dbReference type="InterPro" id="IPR000682">
    <property type="entry name" value="PCMT"/>
</dbReference>
<dbReference type="InterPro" id="IPR029063">
    <property type="entry name" value="SAM-dependent_MTases_sf"/>
</dbReference>
<dbReference type="NCBIfam" id="TIGR00080">
    <property type="entry name" value="pimt"/>
    <property type="match status" value="1"/>
</dbReference>
<dbReference type="NCBIfam" id="NF001453">
    <property type="entry name" value="PRK00312.1"/>
    <property type="match status" value="1"/>
</dbReference>
<dbReference type="PANTHER" id="PTHR11579">
    <property type="entry name" value="PROTEIN-L-ISOASPARTATE O-METHYLTRANSFERASE"/>
    <property type="match status" value="1"/>
</dbReference>
<dbReference type="PANTHER" id="PTHR11579:SF0">
    <property type="entry name" value="PROTEIN-L-ISOASPARTATE(D-ASPARTATE) O-METHYLTRANSFERASE"/>
    <property type="match status" value="1"/>
</dbReference>
<dbReference type="Pfam" id="PF01135">
    <property type="entry name" value="PCMT"/>
    <property type="match status" value="1"/>
</dbReference>
<dbReference type="SUPFAM" id="SSF53335">
    <property type="entry name" value="S-adenosyl-L-methionine-dependent methyltransferases"/>
    <property type="match status" value="1"/>
</dbReference>
<dbReference type="PROSITE" id="PS01279">
    <property type="entry name" value="PCMT"/>
    <property type="match status" value="1"/>
</dbReference>